<dbReference type="EMBL" id="Z37997">
    <property type="protein sequence ID" value="CAA86091.1"/>
    <property type="molecule type" value="Genomic_DNA"/>
</dbReference>
<dbReference type="EMBL" id="BK006942">
    <property type="protein sequence ID" value="DAA08471.1"/>
    <property type="molecule type" value="Genomic_DNA"/>
</dbReference>
<dbReference type="PIR" id="S48365">
    <property type="entry name" value="S48365"/>
</dbReference>
<dbReference type="RefSeq" id="NP_012186.1">
    <property type="nucleotide sequence ID" value="NM_001179429.1"/>
</dbReference>
<dbReference type="SMR" id="P40507"/>
<dbReference type="BioGRID" id="34913">
    <property type="interactions" value="202"/>
</dbReference>
<dbReference type="ComplexPortal" id="CPX-1678">
    <property type="entry name" value="TRAMP complex variant 4-1"/>
</dbReference>
<dbReference type="ComplexPortal" id="CPX-1680">
    <property type="entry name" value="TRAMP complex variant 5-1"/>
</dbReference>
<dbReference type="DIP" id="DIP-2700N"/>
<dbReference type="ELM" id="P40507"/>
<dbReference type="FunCoup" id="P40507">
    <property type="interactions" value="308"/>
</dbReference>
<dbReference type="IntAct" id="P40507">
    <property type="interactions" value="21"/>
</dbReference>
<dbReference type="MINT" id="P40507"/>
<dbReference type="STRING" id="4932.YIL079C"/>
<dbReference type="iPTMnet" id="P40507"/>
<dbReference type="PaxDb" id="4932-YIL079C"/>
<dbReference type="PeptideAtlas" id="P40507"/>
<dbReference type="EnsemblFungi" id="YIL079C_mRNA">
    <property type="protein sequence ID" value="YIL079C"/>
    <property type="gene ID" value="YIL079C"/>
</dbReference>
<dbReference type="GeneID" id="854731"/>
<dbReference type="KEGG" id="sce:YIL079C"/>
<dbReference type="AGR" id="SGD:S000001341"/>
<dbReference type="SGD" id="S000001341">
    <property type="gene designation" value="AIR1"/>
</dbReference>
<dbReference type="VEuPathDB" id="FungiDB:YIL079C"/>
<dbReference type="eggNOG" id="KOG4400">
    <property type="taxonomic scope" value="Eukaryota"/>
</dbReference>
<dbReference type="GeneTree" id="ENSGT00950000183041"/>
<dbReference type="HOGENOM" id="CLU_049076_1_0_1"/>
<dbReference type="InParanoid" id="P40507"/>
<dbReference type="OMA" id="YCGSMDD"/>
<dbReference type="OrthoDB" id="7608935at2759"/>
<dbReference type="BioCyc" id="YEAST:G3O-31344-MONOMER"/>
<dbReference type="BioGRID-ORCS" id="854731">
    <property type="hits" value="0 hits in 10 CRISPR screens"/>
</dbReference>
<dbReference type="PRO" id="PR:P40507"/>
<dbReference type="Proteomes" id="UP000002311">
    <property type="component" value="Chromosome IX"/>
</dbReference>
<dbReference type="RNAct" id="P40507">
    <property type="molecule type" value="protein"/>
</dbReference>
<dbReference type="GO" id="GO:0005737">
    <property type="term" value="C:cytoplasm"/>
    <property type="evidence" value="ECO:0007669"/>
    <property type="project" value="UniProtKB-SubCell"/>
</dbReference>
<dbReference type="GO" id="GO:0005730">
    <property type="term" value="C:nucleolus"/>
    <property type="evidence" value="ECO:0000314"/>
    <property type="project" value="SGD"/>
</dbReference>
<dbReference type="GO" id="GO:0031499">
    <property type="term" value="C:TRAMP complex"/>
    <property type="evidence" value="ECO:0000314"/>
    <property type="project" value="SGD"/>
</dbReference>
<dbReference type="GO" id="GO:0003723">
    <property type="term" value="F:RNA binding"/>
    <property type="evidence" value="ECO:0000318"/>
    <property type="project" value="GO_Central"/>
</dbReference>
<dbReference type="GO" id="GO:0008270">
    <property type="term" value="F:zinc ion binding"/>
    <property type="evidence" value="ECO:0007669"/>
    <property type="project" value="UniProtKB-KW"/>
</dbReference>
<dbReference type="GO" id="GO:0071031">
    <property type="term" value="P:nuclear mRNA surveillance of mRNA 3'-end processing"/>
    <property type="evidence" value="ECO:0000316"/>
    <property type="project" value="SGD"/>
</dbReference>
<dbReference type="GO" id="GO:0071039">
    <property type="term" value="P:nuclear polyadenylation-dependent CUT catabolic process"/>
    <property type="evidence" value="ECO:0000316"/>
    <property type="project" value="SGD"/>
</dbReference>
<dbReference type="GO" id="GO:0071035">
    <property type="term" value="P:nuclear polyadenylation-dependent rRNA catabolic process"/>
    <property type="evidence" value="ECO:0000316"/>
    <property type="project" value="SGD"/>
</dbReference>
<dbReference type="GO" id="GO:0071036">
    <property type="term" value="P:nuclear polyadenylation-dependent snoRNA catabolic process"/>
    <property type="evidence" value="ECO:0000316"/>
    <property type="project" value="SGD"/>
</dbReference>
<dbReference type="GO" id="GO:0071037">
    <property type="term" value="P:nuclear polyadenylation-dependent snRNA catabolic process"/>
    <property type="evidence" value="ECO:0000316"/>
    <property type="project" value="SGD"/>
</dbReference>
<dbReference type="GO" id="GO:0043633">
    <property type="term" value="P:polyadenylation-dependent RNA catabolic process"/>
    <property type="evidence" value="ECO:0007669"/>
    <property type="project" value="InterPro"/>
</dbReference>
<dbReference type="GO" id="GO:0000292">
    <property type="term" value="P:RNA fragment catabolic process"/>
    <property type="evidence" value="ECO:0000303"/>
    <property type="project" value="ComplexPortal"/>
</dbReference>
<dbReference type="GO" id="GO:0071038">
    <property type="term" value="P:TRAMP-dependent tRNA surveillance pathway"/>
    <property type="evidence" value="ECO:0000314"/>
    <property type="project" value="SGD"/>
</dbReference>
<dbReference type="FunFam" id="4.10.60.10:FF:000043">
    <property type="entry name" value="Air1p"/>
    <property type="match status" value="1"/>
</dbReference>
<dbReference type="Gene3D" id="4.10.60.10">
    <property type="entry name" value="Zinc finger, CCHC-type"/>
    <property type="match status" value="2"/>
</dbReference>
<dbReference type="InterPro" id="IPR016713">
    <property type="entry name" value="Air1/2_Saccharomycetales"/>
</dbReference>
<dbReference type="InterPro" id="IPR049024">
    <property type="entry name" value="AIR2-like_ZnK4"/>
</dbReference>
<dbReference type="InterPro" id="IPR051644">
    <property type="entry name" value="TRAMP_AT-DNA-binding"/>
</dbReference>
<dbReference type="InterPro" id="IPR001878">
    <property type="entry name" value="Znf_CCHC"/>
</dbReference>
<dbReference type="InterPro" id="IPR036875">
    <property type="entry name" value="Znf_CCHC_sf"/>
</dbReference>
<dbReference type="PANTHER" id="PTHR46543">
    <property type="entry name" value="ZINC FINGER CCHC DOMAIN-CONTAINING PROTEIN 7"/>
    <property type="match status" value="1"/>
</dbReference>
<dbReference type="PANTHER" id="PTHR46543:SF1">
    <property type="entry name" value="ZINC FINGER CCHC DOMAIN-CONTAINING PROTEIN 7"/>
    <property type="match status" value="1"/>
</dbReference>
<dbReference type="Pfam" id="PF21759">
    <property type="entry name" value="AIR2-like_ZnK4"/>
    <property type="match status" value="1"/>
</dbReference>
<dbReference type="Pfam" id="PF00098">
    <property type="entry name" value="zf-CCHC"/>
    <property type="match status" value="3"/>
</dbReference>
<dbReference type="PIRSF" id="PIRSF018162">
    <property type="entry name" value="PolyA_pol_Air1/2"/>
    <property type="match status" value="1"/>
</dbReference>
<dbReference type="SMART" id="SM00343">
    <property type="entry name" value="ZnF_C2HC"/>
    <property type="match status" value="5"/>
</dbReference>
<dbReference type="SUPFAM" id="SSF57756">
    <property type="entry name" value="Retrovirus zinc finger-like domains"/>
    <property type="match status" value="3"/>
</dbReference>
<dbReference type="PROSITE" id="PS50158">
    <property type="entry name" value="ZF_CCHC"/>
    <property type="match status" value="3"/>
</dbReference>
<comment type="function">
    <text evidence="3 6 7 8">Component of the TRAMP (TRF4) and TRAMP5 complexes which have a poly(A) RNA polymerase activity and are involved in a post-transcriptional quality control mechanism limiting inappropriate expression of genetic information. Polyadenylation is required for the degradative activity of the exosome on several of its nuclear RNA substrates like cryptic transcripts generated by RNA polymerase II and III, or hypomethylated pre-tRNAi-Met. Both complexes polyadenylate RNA processing and degradation intermediates of snRNAs, snoRNAs and mRNAs that accumulate in strains lacking a functional exosome. AIR1 also inhibits the methylation of NPL3 mediated by HMT1 through its interaction with HMT1.</text>
</comment>
<comment type="subunit">
    <text evidence="3 6 7 8">Component of the TRAMP complex (also called TRF4 complex) composed of at least HUL4, MTR4, PAP2/TFR4 and either AIR1 or AIR2. Component of the TRAMP5 complex composed of at least AIR1, MTR4 and TRF5. Interacts with HMT1 and NPL3. The interaction with NPL3 requires the presence of HMT1.</text>
</comment>
<comment type="interaction">
    <interactant intactId="EBI-25083">
        <id>P40507</id>
    </interactant>
    <interactant intactId="EBI-12114">
        <id>Q01560</id>
        <label>NPL3</label>
    </interactant>
    <organismsDiffer>false</organismsDiffer>
    <experiments>3</experiments>
</comment>
<comment type="interaction">
    <interactant intactId="EBI-25083">
        <id>P40507</id>
    </interactant>
    <interactant intactId="EBI-19517">
        <id>P53632</id>
        <label>PAP2</label>
    </interactant>
    <organismsDiffer>false</organismsDiffer>
    <experiments>8</experiments>
</comment>
<comment type="subcellular location">
    <subcellularLocation>
        <location evidence="4">Cytoplasm</location>
    </subcellularLocation>
    <subcellularLocation>
        <location evidence="4">Nucleus</location>
    </subcellularLocation>
</comment>
<comment type="miscellaneous">
    <text evidence="5">Present with 1550 molecules/cell in log phase SD medium.</text>
</comment>
<comment type="similarity">
    <text evidence="9">Belongs to the AIR1 family.</text>
</comment>
<accession>P40507</accession>
<accession>D6VVK5</accession>
<feature type="chain" id="PRO_0000202979" description="Protein AIR1">
    <location>
        <begin position="1"/>
        <end position="360"/>
    </location>
</feature>
<feature type="zinc finger region" description="CCHC-type 1" evidence="1">
    <location>
        <begin position="74"/>
        <end position="91"/>
    </location>
</feature>
<feature type="zinc finger region" description="CCHC-type 2" evidence="1">
    <location>
        <begin position="112"/>
        <end position="129"/>
    </location>
</feature>
<feature type="zinc finger region" description="CCHC-type 3" evidence="1">
    <location>
        <begin position="134"/>
        <end position="151"/>
    </location>
</feature>
<feature type="zinc finger region" description="CCHC-type 4" evidence="1">
    <location>
        <begin position="173"/>
        <end position="190"/>
    </location>
</feature>
<feature type="region of interest" description="Disordered" evidence="2">
    <location>
        <begin position="265"/>
        <end position="360"/>
    </location>
</feature>
<feature type="compositionally biased region" description="Low complexity" evidence="2">
    <location>
        <begin position="274"/>
        <end position="286"/>
    </location>
</feature>
<feature type="compositionally biased region" description="Polar residues" evidence="2">
    <location>
        <begin position="317"/>
        <end position="333"/>
    </location>
</feature>
<feature type="compositionally biased region" description="Low complexity" evidence="2">
    <location>
        <begin position="349"/>
        <end position="360"/>
    </location>
</feature>
<feature type="modified residue" description="Phosphoserine" evidence="10">
    <location>
        <position position="37"/>
    </location>
</feature>
<keyword id="KW-0963">Cytoplasm</keyword>
<keyword id="KW-0479">Metal-binding</keyword>
<keyword id="KW-0539">Nucleus</keyword>
<keyword id="KW-0597">Phosphoprotein</keyword>
<keyword id="KW-1185">Reference proteome</keyword>
<keyword id="KW-0677">Repeat</keyword>
<keyword id="KW-0862">Zinc</keyword>
<keyword id="KW-0863">Zinc-finger</keyword>
<organism>
    <name type="scientific">Saccharomyces cerevisiae (strain ATCC 204508 / S288c)</name>
    <name type="common">Baker's yeast</name>
    <dbReference type="NCBI Taxonomy" id="559292"/>
    <lineage>
        <taxon>Eukaryota</taxon>
        <taxon>Fungi</taxon>
        <taxon>Dikarya</taxon>
        <taxon>Ascomycota</taxon>
        <taxon>Saccharomycotina</taxon>
        <taxon>Saccharomycetes</taxon>
        <taxon>Saccharomycetales</taxon>
        <taxon>Saccharomycetaceae</taxon>
        <taxon>Saccharomyces</taxon>
    </lineage>
</organism>
<sequence length="360" mass="41631">MSTLLSEVESIDTLPYVKDTTPTGSDSSSFNKLLAPSIEDVDANPEELRTLRGQGRYFGITDYDSNGAIMEAEPKCNNCSQRGHLKRNCPHVICTYCGFMDDHYSQHCPKAIICTNCNANGHYKSQCPHKWKKVFCTLCNSKRHSRERCPSIWRSYLLKTKDANQGDFDFQTVFCYNCGNAGHFGDDCAERRSSRVPNTDGSAFCGDNLATKFKQHYFNQLKDYKREASQRQHFDNEHEFNLLDYEYNDDAYDLPGSRTYRDKMKWKGKVQSTRNKNSSNNRYESSNNRKKKSPFSAQNYKVTKNKRVQTHPLDFPRSSQNNRTNDYSSQFSYNRDDFPKGPKNKRGRSSSNKSQRNGRY</sequence>
<name>AIR1_YEAST</name>
<protein>
    <recommendedName>
        <fullName>Protein AIR1</fullName>
    </recommendedName>
    <alternativeName>
        <fullName>Arginine methyltransferase-interacting RING finger protein 1</fullName>
    </alternativeName>
</protein>
<evidence type="ECO:0000255" key="1">
    <source>
        <dbReference type="PROSITE-ProRule" id="PRU00047"/>
    </source>
</evidence>
<evidence type="ECO:0000256" key="2">
    <source>
        <dbReference type="SAM" id="MobiDB-lite"/>
    </source>
</evidence>
<evidence type="ECO:0000269" key="3">
    <source>
    </source>
</evidence>
<evidence type="ECO:0000269" key="4">
    <source>
    </source>
</evidence>
<evidence type="ECO:0000269" key="5">
    <source>
    </source>
</evidence>
<evidence type="ECO:0000269" key="6">
    <source>
    </source>
</evidence>
<evidence type="ECO:0000269" key="7">
    <source>
    </source>
</evidence>
<evidence type="ECO:0000269" key="8">
    <source>
    </source>
</evidence>
<evidence type="ECO:0000305" key="9"/>
<evidence type="ECO:0007744" key="10">
    <source>
    </source>
</evidence>
<reference key="1">
    <citation type="journal article" date="1997" name="Nature">
        <title>The nucleotide sequence of Saccharomyces cerevisiae chromosome IX.</title>
        <authorList>
            <person name="Churcher C.M."/>
            <person name="Bowman S."/>
            <person name="Badcock K."/>
            <person name="Bankier A.T."/>
            <person name="Brown D."/>
            <person name="Chillingworth T."/>
            <person name="Connor R."/>
            <person name="Devlin K."/>
            <person name="Gentles S."/>
            <person name="Hamlin N."/>
            <person name="Harris D.E."/>
            <person name="Horsnell T."/>
            <person name="Hunt S."/>
            <person name="Jagels K."/>
            <person name="Jones M."/>
            <person name="Lye G."/>
            <person name="Moule S."/>
            <person name="Odell C."/>
            <person name="Pearson D."/>
            <person name="Rajandream M.A."/>
            <person name="Rice P."/>
            <person name="Rowley N."/>
            <person name="Skelton J."/>
            <person name="Smith V."/>
            <person name="Walsh S.V."/>
            <person name="Whitehead S."/>
            <person name="Barrell B.G."/>
        </authorList>
    </citation>
    <scope>NUCLEOTIDE SEQUENCE [LARGE SCALE GENOMIC DNA]</scope>
    <source>
        <strain>ATCC 204508 / S288c</strain>
    </source>
</reference>
<reference key="2">
    <citation type="journal article" date="2014" name="G3 (Bethesda)">
        <title>The reference genome sequence of Saccharomyces cerevisiae: Then and now.</title>
        <authorList>
            <person name="Engel S.R."/>
            <person name="Dietrich F.S."/>
            <person name="Fisk D.G."/>
            <person name="Binkley G."/>
            <person name="Balakrishnan R."/>
            <person name="Costanzo M.C."/>
            <person name="Dwight S.S."/>
            <person name="Hitz B.C."/>
            <person name="Karra K."/>
            <person name="Nash R.S."/>
            <person name="Weng S."/>
            <person name="Wong E.D."/>
            <person name="Lloyd P."/>
            <person name="Skrzypek M.S."/>
            <person name="Miyasato S.R."/>
            <person name="Simison M."/>
            <person name="Cherry J.M."/>
        </authorList>
    </citation>
    <scope>GENOME REANNOTATION</scope>
    <source>
        <strain>ATCC 204508 / S288c</strain>
    </source>
</reference>
<reference key="3">
    <citation type="journal article" date="2000" name="J. Biol. Chem.">
        <title>Novel RING finger proteins, Air1p and Air2p, interact with Hmt1p and inhibit the arginine methylation of Npl3p.</title>
        <authorList>
            <person name="Inoue K."/>
            <person name="Mizuno T."/>
            <person name="Wada K."/>
            <person name="Hagiwara M."/>
        </authorList>
    </citation>
    <scope>FUNCTION</scope>
    <scope>INTERACTION WITH HMT1 AND NPL3</scope>
</reference>
<reference key="4">
    <citation type="journal article" date="2003" name="Nature">
        <title>Global analysis of protein localization in budding yeast.</title>
        <authorList>
            <person name="Huh W.-K."/>
            <person name="Falvo J.V."/>
            <person name="Gerke L.C."/>
            <person name="Carroll A.S."/>
            <person name="Howson R.W."/>
            <person name="Weissman J.S."/>
            <person name="O'Shea E.K."/>
        </authorList>
    </citation>
    <scope>SUBCELLULAR LOCATION [LARGE SCALE ANALYSIS]</scope>
</reference>
<reference key="5">
    <citation type="journal article" date="2003" name="Nature">
        <title>Global analysis of protein expression in yeast.</title>
        <authorList>
            <person name="Ghaemmaghami S."/>
            <person name="Huh W.-K."/>
            <person name="Bower K."/>
            <person name="Howson R.W."/>
            <person name="Belle A."/>
            <person name="Dephoure N."/>
            <person name="O'Shea E.K."/>
            <person name="Weissman J.S."/>
        </authorList>
    </citation>
    <scope>LEVEL OF PROTEIN EXPRESSION [LARGE SCALE ANALYSIS]</scope>
</reference>
<reference key="6">
    <citation type="journal article" date="2005" name="Cell">
        <title>Cryptic pol II transcripts are degraded by a nuclear quality control pathway involving a new poly(A) polymerase.</title>
        <authorList>
            <person name="Wyers F."/>
            <person name="Rougemaille M."/>
            <person name="Badis G."/>
            <person name="Rousselle J.-C."/>
            <person name="Dufour M.-E."/>
            <person name="Boulay J."/>
            <person name="Regnault B."/>
            <person name="Devaux F."/>
            <person name="Namane A."/>
            <person name="Seraphin B."/>
            <person name="Libri D."/>
            <person name="Jacquier A."/>
        </authorList>
    </citation>
    <scope>IDENTIFICATION IN THE TRF4 COMPLEX</scope>
    <scope>IDENTIFICATION BY MASS SPECTROMETRY</scope>
    <scope>FUNCTION OF THE TRF4 COMPLEX</scope>
</reference>
<reference key="7">
    <citation type="journal article" date="2005" name="PLoS Biol.">
        <title>A new yeast poly(A) polymerase complex involved in RNA quality control.</title>
        <authorList>
            <person name="Vanacova S."/>
            <person name="Wolf J."/>
            <person name="Martin G."/>
            <person name="Blank D."/>
            <person name="Dettwiler S."/>
            <person name="Friedlein A."/>
            <person name="Langen H."/>
            <person name="Keith G."/>
            <person name="Keller W."/>
        </authorList>
    </citation>
    <scope>IDENTIFICATION IN THE TRF4 COMPLEX</scope>
    <scope>IDENTIFICATION BY MASS SPECTROMETRY</scope>
    <scope>FUNCTION OF THE TRF4 COMPLEX</scope>
</reference>
<reference key="8">
    <citation type="journal article" date="2006" name="EMBO Rep.">
        <title>Yeast Trf5p is a nuclear poly(A) polymerase.</title>
        <authorList>
            <person name="Houseley J."/>
            <person name="Tollervey D."/>
        </authorList>
    </citation>
    <scope>IDENTIFICATION IN THE TRAMP5 COMPLEX</scope>
    <scope>IDENTIFICATION BY MASS SPECTROMETRY</scope>
    <scope>FUNCTION OF THE TRAMP5 COMPLEX</scope>
</reference>
<reference key="9">
    <citation type="journal article" date="2008" name="Mol. Cell. Proteomics">
        <title>A multidimensional chromatography technology for in-depth phosphoproteome analysis.</title>
        <authorList>
            <person name="Albuquerque C.P."/>
            <person name="Smolka M.B."/>
            <person name="Payne S.H."/>
            <person name="Bafna V."/>
            <person name="Eng J."/>
            <person name="Zhou H."/>
        </authorList>
    </citation>
    <scope>PHOSPHORYLATION [LARGE SCALE ANALYSIS] AT SER-37</scope>
    <scope>IDENTIFICATION BY MASS SPECTROMETRY [LARGE SCALE ANALYSIS]</scope>
</reference>
<gene>
    <name type="primary">AIR1</name>
    <name type="ordered locus">YIL079C</name>
</gene>
<proteinExistence type="evidence at protein level"/>